<sequence length="85" mass="9763">MDSKKIARINELAKKKKTEGLTPEEAVEQAKLREEYIAGYRRAVRHHIEGIKIVDEEGNDVTPEKLRQVQREKGLHGRSLDDPES</sequence>
<organism>
    <name type="scientific">Streptococcus thermophilus (strain CNRZ 1066)</name>
    <dbReference type="NCBI Taxonomy" id="299768"/>
    <lineage>
        <taxon>Bacteria</taxon>
        <taxon>Bacillati</taxon>
        <taxon>Bacillota</taxon>
        <taxon>Bacilli</taxon>
        <taxon>Lactobacillales</taxon>
        <taxon>Streptococcaceae</taxon>
        <taxon>Streptococcus</taxon>
    </lineage>
</organism>
<gene>
    <name type="ordered locus">str0508</name>
</gene>
<evidence type="ECO:0000255" key="1">
    <source>
        <dbReference type="HAMAP-Rule" id="MF_01103"/>
    </source>
</evidence>
<evidence type="ECO:0000256" key="2">
    <source>
        <dbReference type="SAM" id="MobiDB-lite"/>
    </source>
</evidence>
<name>Y508_STRT1</name>
<protein>
    <recommendedName>
        <fullName evidence="1">UPF0291 protein str0508</fullName>
    </recommendedName>
</protein>
<dbReference type="EMBL" id="CP000024">
    <property type="protein sequence ID" value="AAV62105.1"/>
    <property type="molecule type" value="Genomic_DNA"/>
</dbReference>
<dbReference type="RefSeq" id="WP_002949992.1">
    <property type="nucleotide sequence ID" value="NC_006449.1"/>
</dbReference>
<dbReference type="SMR" id="Q5M0Y4"/>
<dbReference type="KEGG" id="stc:str0508"/>
<dbReference type="HOGENOM" id="CLU_173137_0_2_9"/>
<dbReference type="GO" id="GO:0005737">
    <property type="term" value="C:cytoplasm"/>
    <property type="evidence" value="ECO:0007669"/>
    <property type="project" value="UniProtKB-SubCell"/>
</dbReference>
<dbReference type="Gene3D" id="1.10.287.540">
    <property type="entry name" value="Helix hairpin bin"/>
    <property type="match status" value="1"/>
</dbReference>
<dbReference type="HAMAP" id="MF_01103">
    <property type="entry name" value="UPF0291"/>
    <property type="match status" value="1"/>
</dbReference>
<dbReference type="InterPro" id="IPR009242">
    <property type="entry name" value="DUF896"/>
</dbReference>
<dbReference type="NCBIfam" id="NF002711">
    <property type="entry name" value="PRK02539.1"/>
    <property type="match status" value="1"/>
</dbReference>
<dbReference type="PANTHER" id="PTHR37300">
    <property type="entry name" value="UPF0291 PROTEIN CBO2609/CLC_2481"/>
    <property type="match status" value="1"/>
</dbReference>
<dbReference type="PANTHER" id="PTHR37300:SF1">
    <property type="entry name" value="UPF0291 PROTEIN YNZC"/>
    <property type="match status" value="1"/>
</dbReference>
<dbReference type="Pfam" id="PF05979">
    <property type="entry name" value="DUF896"/>
    <property type="match status" value="1"/>
</dbReference>
<dbReference type="SUPFAM" id="SSF158221">
    <property type="entry name" value="YnzC-like"/>
    <property type="match status" value="1"/>
</dbReference>
<feature type="chain" id="PRO_0000095006" description="UPF0291 protein str0508">
    <location>
        <begin position="1"/>
        <end position="85"/>
    </location>
</feature>
<feature type="region of interest" description="Disordered" evidence="2">
    <location>
        <begin position="62"/>
        <end position="85"/>
    </location>
</feature>
<reference key="1">
    <citation type="journal article" date="2004" name="Nat. Biotechnol.">
        <title>Complete sequence and comparative genome analysis of the dairy bacterium Streptococcus thermophilus.</title>
        <authorList>
            <person name="Bolotin A."/>
            <person name="Quinquis B."/>
            <person name="Renault P."/>
            <person name="Sorokin A."/>
            <person name="Ehrlich S.D."/>
            <person name="Kulakauskas S."/>
            <person name="Lapidus A."/>
            <person name="Goltsman E."/>
            <person name="Mazur M."/>
            <person name="Pusch G.D."/>
            <person name="Fonstein M."/>
            <person name="Overbeek R."/>
            <person name="Kyprides N."/>
            <person name="Purnelle B."/>
            <person name="Prozzi D."/>
            <person name="Ngui K."/>
            <person name="Masuy D."/>
            <person name="Hancy F."/>
            <person name="Burteau S."/>
            <person name="Boutry M."/>
            <person name="Delcour J."/>
            <person name="Goffeau A."/>
            <person name="Hols P."/>
        </authorList>
    </citation>
    <scope>NUCLEOTIDE SEQUENCE [LARGE SCALE GENOMIC DNA]</scope>
    <source>
        <strain>CNRZ 1066</strain>
    </source>
</reference>
<proteinExistence type="inferred from homology"/>
<comment type="subcellular location">
    <subcellularLocation>
        <location evidence="1">Cytoplasm</location>
    </subcellularLocation>
</comment>
<comment type="similarity">
    <text evidence="1">Belongs to the UPF0291 family.</text>
</comment>
<accession>Q5M0Y4</accession>
<keyword id="KW-0963">Cytoplasm</keyword>